<sequence>MSDRFELYLTCPKGLEGLLAEEAKGLGLEEVREHTSAIRGAADMETAYRLCVWSRLANRVLLVLKRFSMKNADDLYDGVNAVDWADHLAADGTLAVEFSGHGSGIDNTHFGALKVKDAIVDKLRNREGLRPSVEKIDPDVRVHLRLDRGEAILSLDLSGHSLHQRGYRLQQGAAPLKENLAAAVLIRSGWPRIAAEGGALADPMCGVGTFLVEAAMIAADIAPNLKRERWGFSAWLGHVPALWRKVHDEAQARAQAGLAKPPLWIRGYEADPRLIQPGRNNVERAGLGDWVKIYQGEVSTFEPRPDQNQKGLVISNPPYGERLGDEASLLYLYQNLGERLRQACMGWEAAVFTGAPQLGKRMGIRSHKQYAFWNGALPCKLLLFKVQPDQFVTGERREAQPEGTEVRQQAPQASEPARLSEGAQMFANRLQKNLKQLGKWARREQIDCYRLYDADMPEYALAVDLYQDWVHVQEYAAPRSIDPDKAQARLLDALAAIPQALGISPQRVVLKRRERQSGTRQYERQATEGRFQEVNEGGVKLLVNLTDYLDTGLFLDHRPMRMRIQREAAGKRFLNLFCYTATATVHAAKGGARSTTSVDLSKTYLDWARRNLALNGYSERNRLEQSDVMAWLEGNRDSYDLIFIDPPTFSNSKRMEGVFDVQRDHVQLLDLAMARLAPGGVLYFSNNFRKFQLDEHLMARYAVEEITAQTLDPDFARNNRIHRAWRLQLR</sequence>
<comment type="function">
    <text evidence="1">Specifically methylates the guanine in position 2445 (m2G2445) and the guanine in position 2069 (m7G2069) of 23S rRNA.</text>
</comment>
<comment type="catalytic activity">
    <reaction evidence="1">
        <text>guanosine(2445) in 23S rRNA + S-adenosyl-L-methionine = N(2)-methylguanosine(2445) in 23S rRNA + S-adenosyl-L-homocysteine + H(+)</text>
        <dbReference type="Rhea" id="RHEA:42740"/>
        <dbReference type="Rhea" id="RHEA-COMP:10215"/>
        <dbReference type="Rhea" id="RHEA-COMP:10216"/>
        <dbReference type="ChEBI" id="CHEBI:15378"/>
        <dbReference type="ChEBI" id="CHEBI:57856"/>
        <dbReference type="ChEBI" id="CHEBI:59789"/>
        <dbReference type="ChEBI" id="CHEBI:74269"/>
        <dbReference type="ChEBI" id="CHEBI:74481"/>
        <dbReference type="EC" id="2.1.1.173"/>
    </reaction>
</comment>
<comment type="catalytic activity">
    <reaction evidence="1">
        <text>guanosine(2069) in 23S rRNA + S-adenosyl-L-methionine = N(2)-methylguanosine(2069) in 23S rRNA + S-adenosyl-L-homocysteine + H(+)</text>
        <dbReference type="Rhea" id="RHEA:43772"/>
        <dbReference type="Rhea" id="RHEA-COMP:10688"/>
        <dbReference type="Rhea" id="RHEA-COMP:10689"/>
        <dbReference type="ChEBI" id="CHEBI:15378"/>
        <dbReference type="ChEBI" id="CHEBI:57856"/>
        <dbReference type="ChEBI" id="CHEBI:59789"/>
        <dbReference type="ChEBI" id="CHEBI:74269"/>
        <dbReference type="ChEBI" id="CHEBI:74481"/>
        <dbReference type="EC" id="2.1.1.264"/>
    </reaction>
</comment>
<comment type="subcellular location">
    <subcellularLocation>
        <location evidence="1">Cytoplasm</location>
    </subcellularLocation>
</comment>
<comment type="similarity">
    <text evidence="1">Belongs to the methyltransferase superfamily. RlmKL family.</text>
</comment>
<name>RLMKL_PSEPG</name>
<proteinExistence type="inferred from homology"/>
<dbReference type="EC" id="2.1.1.173" evidence="1"/>
<dbReference type="EC" id="2.1.1.264" evidence="1"/>
<dbReference type="EMBL" id="CP000926">
    <property type="protein sequence ID" value="ABY97513.1"/>
    <property type="molecule type" value="Genomic_DNA"/>
</dbReference>
<dbReference type="SMR" id="B0KG92"/>
<dbReference type="KEGG" id="ppg:PputGB1_1608"/>
<dbReference type="eggNOG" id="COG0116">
    <property type="taxonomic scope" value="Bacteria"/>
</dbReference>
<dbReference type="eggNOG" id="COG1092">
    <property type="taxonomic scope" value="Bacteria"/>
</dbReference>
<dbReference type="HOGENOM" id="CLU_014042_2_0_6"/>
<dbReference type="Proteomes" id="UP000002157">
    <property type="component" value="Chromosome"/>
</dbReference>
<dbReference type="GO" id="GO:0005737">
    <property type="term" value="C:cytoplasm"/>
    <property type="evidence" value="ECO:0007669"/>
    <property type="project" value="UniProtKB-SubCell"/>
</dbReference>
<dbReference type="GO" id="GO:0052915">
    <property type="term" value="F:23S rRNA (guanine(2445)-N(2))-methyltransferase activity"/>
    <property type="evidence" value="ECO:0007669"/>
    <property type="project" value="UniProtKB-UniRule"/>
</dbReference>
<dbReference type="GO" id="GO:0003723">
    <property type="term" value="F:RNA binding"/>
    <property type="evidence" value="ECO:0007669"/>
    <property type="project" value="UniProtKB-KW"/>
</dbReference>
<dbReference type="GO" id="GO:0070043">
    <property type="term" value="F:rRNA (guanine-N7-)-methyltransferase activity"/>
    <property type="evidence" value="ECO:0007669"/>
    <property type="project" value="UniProtKB-UniRule"/>
</dbReference>
<dbReference type="CDD" id="cd02440">
    <property type="entry name" value="AdoMet_MTases"/>
    <property type="match status" value="1"/>
</dbReference>
<dbReference type="CDD" id="cd11715">
    <property type="entry name" value="THUMP_AdoMetMT"/>
    <property type="match status" value="1"/>
</dbReference>
<dbReference type="Gene3D" id="3.30.2130.30">
    <property type="match status" value="1"/>
</dbReference>
<dbReference type="Gene3D" id="3.30.750.80">
    <property type="entry name" value="RNA methyltransferase domain (HRMD) like"/>
    <property type="match status" value="1"/>
</dbReference>
<dbReference type="Gene3D" id="3.40.50.150">
    <property type="entry name" value="Vaccinia Virus protein VP39"/>
    <property type="match status" value="2"/>
</dbReference>
<dbReference type="HAMAP" id="MF_01858">
    <property type="entry name" value="23SrRNA_methyltr_KL"/>
    <property type="match status" value="1"/>
</dbReference>
<dbReference type="InterPro" id="IPR017244">
    <property type="entry name" value="23SrRNA_methyltr_KL"/>
</dbReference>
<dbReference type="InterPro" id="IPR002052">
    <property type="entry name" value="DNA_methylase_N6_adenine_CS"/>
</dbReference>
<dbReference type="InterPro" id="IPR000241">
    <property type="entry name" value="RlmKL-like_Mtase"/>
</dbReference>
<dbReference type="InterPro" id="IPR054170">
    <property type="entry name" value="RlmL_1st"/>
</dbReference>
<dbReference type="InterPro" id="IPR019614">
    <property type="entry name" value="SAM-dep_methyl-trfase"/>
</dbReference>
<dbReference type="InterPro" id="IPR029063">
    <property type="entry name" value="SAM-dependent_MTases_sf"/>
</dbReference>
<dbReference type="InterPro" id="IPR004114">
    <property type="entry name" value="THUMP_dom"/>
</dbReference>
<dbReference type="NCBIfam" id="NF008748">
    <property type="entry name" value="PRK11783.1"/>
    <property type="match status" value="1"/>
</dbReference>
<dbReference type="PANTHER" id="PTHR47313">
    <property type="entry name" value="RIBOSOMAL RNA LARGE SUBUNIT METHYLTRANSFERASE K/L"/>
    <property type="match status" value="1"/>
</dbReference>
<dbReference type="PANTHER" id="PTHR47313:SF1">
    <property type="entry name" value="RIBOSOMAL RNA LARGE SUBUNIT METHYLTRANSFERASE K_L"/>
    <property type="match status" value="1"/>
</dbReference>
<dbReference type="Pfam" id="PF10672">
    <property type="entry name" value="Methyltrans_SAM"/>
    <property type="match status" value="1"/>
</dbReference>
<dbReference type="Pfam" id="PF22020">
    <property type="entry name" value="RlmL_1st"/>
    <property type="match status" value="1"/>
</dbReference>
<dbReference type="Pfam" id="PF02926">
    <property type="entry name" value="THUMP"/>
    <property type="match status" value="1"/>
</dbReference>
<dbReference type="Pfam" id="PF01170">
    <property type="entry name" value="UPF0020"/>
    <property type="match status" value="1"/>
</dbReference>
<dbReference type="PIRSF" id="PIRSF037618">
    <property type="entry name" value="RNA_Mtase_bacteria_prd"/>
    <property type="match status" value="1"/>
</dbReference>
<dbReference type="SMART" id="SM00981">
    <property type="entry name" value="THUMP"/>
    <property type="match status" value="1"/>
</dbReference>
<dbReference type="SUPFAM" id="SSF53335">
    <property type="entry name" value="S-adenosyl-L-methionine-dependent methyltransferases"/>
    <property type="match status" value="2"/>
</dbReference>
<dbReference type="PROSITE" id="PS51165">
    <property type="entry name" value="THUMP"/>
    <property type="match status" value="1"/>
</dbReference>
<protein>
    <recommendedName>
        <fullName evidence="1">Ribosomal RNA large subunit methyltransferase K/L</fullName>
    </recommendedName>
    <domain>
        <recommendedName>
            <fullName evidence="1">23S rRNA m2G2445 methyltransferase</fullName>
            <ecNumber evidence="1">2.1.1.173</ecNumber>
        </recommendedName>
        <alternativeName>
            <fullName evidence="1">rRNA (guanine-N(2)-)-methyltransferase RlmL</fullName>
        </alternativeName>
    </domain>
    <domain>
        <recommendedName>
            <fullName evidence="1">23S rRNA m7G2069 methyltransferase</fullName>
            <ecNumber evidence="1">2.1.1.264</ecNumber>
        </recommendedName>
        <alternativeName>
            <fullName evidence="1">rRNA (guanine-N(7)-)-methyltransferase RlmK</fullName>
        </alternativeName>
    </domain>
</protein>
<evidence type="ECO:0000255" key="1">
    <source>
        <dbReference type="HAMAP-Rule" id="MF_01858"/>
    </source>
</evidence>
<evidence type="ECO:0000256" key="2">
    <source>
        <dbReference type="SAM" id="MobiDB-lite"/>
    </source>
</evidence>
<organism>
    <name type="scientific">Pseudomonas putida (strain GB-1)</name>
    <dbReference type="NCBI Taxonomy" id="76869"/>
    <lineage>
        <taxon>Bacteria</taxon>
        <taxon>Pseudomonadati</taxon>
        <taxon>Pseudomonadota</taxon>
        <taxon>Gammaproteobacteria</taxon>
        <taxon>Pseudomonadales</taxon>
        <taxon>Pseudomonadaceae</taxon>
        <taxon>Pseudomonas</taxon>
    </lineage>
</organism>
<accession>B0KG92</accession>
<gene>
    <name evidence="1" type="primary">rlmL</name>
    <name type="ordered locus">PputGB1_1608</name>
</gene>
<feature type="chain" id="PRO_0000366792" description="Ribosomal RNA large subunit methyltransferase K/L">
    <location>
        <begin position="1"/>
        <end position="730"/>
    </location>
</feature>
<feature type="domain" description="THUMP" evidence="1">
    <location>
        <begin position="46"/>
        <end position="157"/>
    </location>
</feature>
<feature type="region of interest" description="Disordered" evidence="2">
    <location>
        <begin position="395"/>
        <end position="418"/>
    </location>
</feature>
<keyword id="KW-0963">Cytoplasm</keyword>
<keyword id="KW-0489">Methyltransferase</keyword>
<keyword id="KW-0694">RNA-binding</keyword>
<keyword id="KW-0698">rRNA processing</keyword>
<keyword id="KW-0949">S-adenosyl-L-methionine</keyword>
<keyword id="KW-0808">Transferase</keyword>
<reference key="1">
    <citation type="submission" date="2008-01" db="EMBL/GenBank/DDBJ databases">
        <title>Complete sequence of Pseudomonas putida GB-1.</title>
        <authorList>
            <consortium name="US DOE Joint Genome Institute"/>
            <person name="Copeland A."/>
            <person name="Lucas S."/>
            <person name="Lapidus A."/>
            <person name="Barry K."/>
            <person name="Glavina del Rio T."/>
            <person name="Dalin E."/>
            <person name="Tice H."/>
            <person name="Pitluck S."/>
            <person name="Bruce D."/>
            <person name="Goodwin L."/>
            <person name="Chertkov O."/>
            <person name="Brettin T."/>
            <person name="Detter J.C."/>
            <person name="Han C."/>
            <person name="Kuske C.R."/>
            <person name="Schmutz J."/>
            <person name="Larimer F."/>
            <person name="Land M."/>
            <person name="Hauser L."/>
            <person name="Kyrpides N."/>
            <person name="Kim E."/>
            <person name="McCarthy J.K."/>
            <person name="Richardson P."/>
        </authorList>
    </citation>
    <scope>NUCLEOTIDE SEQUENCE [LARGE SCALE GENOMIC DNA]</scope>
    <source>
        <strain>GB-1</strain>
    </source>
</reference>